<sequence length="116" mass="13773">MPGDNWTNSIIFRIKTLKDQIIEWSKNPTEENEYFSEKYLEKINTLTKTLDWCEKSNKSEVELRWLNQALSLPHQVPPPRYSYIRSESSRNNLRNSARNQPQNLVSEQDSDSNREN</sequence>
<organismHost>
    <name type="scientific">Glycine max</name>
    <name type="common">Soybean</name>
    <name type="synonym">Glycine hispida</name>
    <dbReference type="NCBI Taxonomy" id="3847"/>
</organismHost>
<organismHost>
    <name type="scientific">Lablab purpureus</name>
    <name type="common">Hyacinth bean</name>
    <name type="synonym">Dolichos lablab</name>
    <dbReference type="NCBI Taxonomy" id="35936"/>
</organismHost>
<organismHost>
    <name type="scientific">Phaseolus vulgaris</name>
    <name type="common">Kidney bean</name>
    <name type="synonym">French bean</name>
    <dbReference type="NCBI Taxonomy" id="3885"/>
</organismHost>
<organismHost>
    <name type="scientific">Vigna unguiculata</name>
    <name type="common">Cowpea</name>
    <dbReference type="NCBI Taxonomy" id="3917"/>
</organismHost>
<organism>
    <name type="scientific">Soybean chlorotic mottle virus</name>
    <dbReference type="NCBI Taxonomy" id="10651"/>
    <lineage>
        <taxon>Viruses</taxon>
        <taxon>Riboviria</taxon>
        <taxon>Pararnavirae</taxon>
        <taxon>Artverviricota</taxon>
        <taxon>Revtraviricetes</taxon>
        <taxon>Ortervirales</taxon>
        <taxon>Caulimoviridae</taxon>
        <taxon>Soymovirus</taxon>
        <taxon>Soymovirus maculaglycinis</taxon>
    </lineage>
</organism>
<name>Y1B_SOCMV</name>
<keyword id="KW-1185">Reference proteome</keyword>
<accession>P15632</accession>
<accession>Q65940</accession>
<gene>
    <name type="ORF">ORF Ib</name>
</gene>
<evidence type="ECO:0000256" key="1">
    <source>
        <dbReference type="SAM" id="MobiDB-lite"/>
    </source>
</evidence>
<feature type="chain" id="PRO_0000222083" description="Uncharacterized protein 1b">
    <location>
        <begin position="1"/>
        <end position="116"/>
    </location>
</feature>
<feature type="region of interest" description="Disordered" evidence="1">
    <location>
        <begin position="76"/>
        <end position="116"/>
    </location>
</feature>
<feature type="compositionally biased region" description="Low complexity" evidence="1">
    <location>
        <begin position="85"/>
        <end position="99"/>
    </location>
</feature>
<protein>
    <recommendedName>
        <fullName>Uncharacterized protein 1b</fullName>
    </recommendedName>
</protein>
<proteinExistence type="predicted"/>
<dbReference type="EMBL" id="X15828">
    <property type="protein sequence ID" value="CAC42878.1"/>
    <property type="molecule type" value="Genomic_DNA"/>
</dbReference>
<dbReference type="PIR" id="JS0380">
    <property type="entry name" value="JS0380"/>
</dbReference>
<dbReference type="SMR" id="P15632"/>
<dbReference type="KEGG" id="vg:912261"/>
<dbReference type="OrthoDB" id="9577at10239"/>
<dbReference type="Proteomes" id="UP000001065">
    <property type="component" value="Genome"/>
</dbReference>
<reference key="1">
    <citation type="journal article" date="1989" name="Nucleic Acids Res.">
        <title>The complete sequence of soybean chlorotic mottle virus DNA and the identification of a novel promoter.</title>
        <authorList>
            <person name="Hasegawa A."/>
            <person name="Verver J."/>
            <person name="Shimada A."/>
            <person name="Saito M."/>
            <person name="Goldbach R."/>
            <person name="van Kammen A."/>
            <person name="Miki K."/>
            <person name="Kameya-Iwaki M."/>
            <person name="Hibi T."/>
        </authorList>
    </citation>
    <scope>NUCLEOTIDE SEQUENCE [GENOMIC DNA]</scope>
</reference>
<reference key="2">
    <citation type="submission" date="2000-11" db="EMBL/GenBank/DDBJ databases">
        <authorList>
            <person name="Hibi T."/>
        </authorList>
    </citation>
    <scope>SEQUENCE REVISION TO 15 AND C-TERMINUS</scope>
</reference>